<organism>
    <name type="scientific">Synechococcus sp. (strain CC9605)</name>
    <dbReference type="NCBI Taxonomy" id="110662"/>
    <lineage>
        <taxon>Bacteria</taxon>
        <taxon>Bacillati</taxon>
        <taxon>Cyanobacteriota</taxon>
        <taxon>Cyanophyceae</taxon>
        <taxon>Synechococcales</taxon>
        <taxon>Synechococcaceae</taxon>
        <taxon>Synechococcus</taxon>
    </lineage>
</organism>
<sequence>MAPVALLSVSDKSGLVPLAEALHRTHGYQLLSSGGTAKVLEQAGLPVTRVSDHTGAPEILGGRVKTLHPRVHGGILAKRGDASHQADLEQQNIAPIDMVVVNLYPFRETIARPDVTWDQAIENIDIGGPAMVRAAAKNHADVAVLTSPDQYDRLLTAMAESGGSVPSALRRQLALEAFNHTASYDTAIGRWMAEQATAKGCPWLEAVPLRQTLRYGENPHQKARWFSHPKQGWGGAIQLQGKELSTNNLLDLEAALATVREFGYGADGSAPASQPAAVVVKHTNPCGVAVGASMPAALTRALDADRVSAFGGIIAMNDVVEATAARELTSLFLECVVAPGFTPEAREVLAAKANLRLLELAPQAIDVAGPDHVRSILGGLLVQDLDDQAITPTDWTVASQRPPTPQEKLDLEFAWRLVRHVRSNAIVVAKDGQSLGVGAGQMNRVGSARIALEAAGEKAQGAVLASDGFFPFDDTVRLAASQGITAVIHPGGSMRDGDSIKACDELGLAMQLTGRRHFLH</sequence>
<proteinExistence type="inferred from homology"/>
<dbReference type="EC" id="2.1.2.3" evidence="1"/>
<dbReference type="EC" id="3.5.4.10" evidence="1"/>
<dbReference type="EMBL" id="CP000110">
    <property type="protein sequence ID" value="ABB34019.1"/>
    <property type="molecule type" value="Genomic_DNA"/>
</dbReference>
<dbReference type="RefSeq" id="WP_011363273.1">
    <property type="nucleotide sequence ID" value="NC_007516.1"/>
</dbReference>
<dbReference type="SMR" id="Q3AN13"/>
<dbReference type="STRING" id="110662.Syncc9605_0243"/>
<dbReference type="KEGG" id="syd:Syncc9605_0243"/>
<dbReference type="eggNOG" id="COG0138">
    <property type="taxonomic scope" value="Bacteria"/>
</dbReference>
<dbReference type="HOGENOM" id="CLU_016316_5_2_3"/>
<dbReference type="OrthoDB" id="9802065at2"/>
<dbReference type="UniPathway" id="UPA00074">
    <property type="reaction ID" value="UER00133"/>
</dbReference>
<dbReference type="UniPathway" id="UPA00074">
    <property type="reaction ID" value="UER00135"/>
</dbReference>
<dbReference type="GO" id="GO:0005829">
    <property type="term" value="C:cytosol"/>
    <property type="evidence" value="ECO:0007669"/>
    <property type="project" value="TreeGrafter"/>
</dbReference>
<dbReference type="GO" id="GO:0003937">
    <property type="term" value="F:IMP cyclohydrolase activity"/>
    <property type="evidence" value="ECO:0007669"/>
    <property type="project" value="UniProtKB-UniRule"/>
</dbReference>
<dbReference type="GO" id="GO:0004643">
    <property type="term" value="F:phosphoribosylaminoimidazolecarboxamide formyltransferase activity"/>
    <property type="evidence" value="ECO:0007669"/>
    <property type="project" value="UniProtKB-UniRule"/>
</dbReference>
<dbReference type="GO" id="GO:0006189">
    <property type="term" value="P:'de novo' IMP biosynthetic process"/>
    <property type="evidence" value="ECO:0007669"/>
    <property type="project" value="UniProtKB-UniRule"/>
</dbReference>
<dbReference type="CDD" id="cd01421">
    <property type="entry name" value="IMPCH"/>
    <property type="match status" value="1"/>
</dbReference>
<dbReference type="FunFam" id="3.40.140.20:FF:000001">
    <property type="entry name" value="Bifunctional purine biosynthesis protein PurH"/>
    <property type="match status" value="1"/>
</dbReference>
<dbReference type="FunFam" id="3.40.50.1380:FF:000001">
    <property type="entry name" value="Bifunctional purine biosynthesis protein PurH"/>
    <property type="match status" value="1"/>
</dbReference>
<dbReference type="Gene3D" id="3.40.140.20">
    <property type="match status" value="2"/>
</dbReference>
<dbReference type="Gene3D" id="3.40.50.1380">
    <property type="entry name" value="Methylglyoxal synthase-like domain"/>
    <property type="match status" value="1"/>
</dbReference>
<dbReference type="HAMAP" id="MF_00139">
    <property type="entry name" value="PurH"/>
    <property type="match status" value="1"/>
</dbReference>
<dbReference type="InterPro" id="IPR024051">
    <property type="entry name" value="AICAR_Tfase_dup_dom_sf"/>
</dbReference>
<dbReference type="InterPro" id="IPR016193">
    <property type="entry name" value="Cytidine_deaminase-like"/>
</dbReference>
<dbReference type="InterPro" id="IPR011607">
    <property type="entry name" value="MGS-like_dom"/>
</dbReference>
<dbReference type="InterPro" id="IPR036914">
    <property type="entry name" value="MGS-like_dom_sf"/>
</dbReference>
<dbReference type="InterPro" id="IPR002695">
    <property type="entry name" value="PurH-like"/>
</dbReference>
<dbReference type="NCBIfam" id="NF002049">
    <property type="entry name" value="PRK00881.1"/>
    <property type="match status" value="1"/>
</dbReference>
<dbReference type="NCBIfam" id="TIGR00355">
    <property type="entry name" value="purH"/>
    <property type="match status" value="1"/>
</dbReference>
<dbReference type="PANTHER" id="PTHR11692:SF0">
    <property type="entry name" value="BIFUNCTIONAL PURINE BIOSYNTHESIS PROTEIN ATIC"/>
    <property type="match status" value="1"/>
</dbReference>
<dbReference type="PANTHER" id="PTHR11692">
    <property type="entry name" value="BIFUNCTIONAL PURINE BIOSYNTHESIS PROTEIN PURH"/>
    <property type="match status" value="1"/>
</dbReference>
<dbReference type="Pfam" id="PF01808">
    <property type="entry name" value="AICARFT_IMPCHas"/>
    <property type="match status" value="1"/>
</dbReference>
<dbReference type="Pfam" id="PF02142">
    <property type="entry name" value="MGS"/>
    <property type="match status" value="1"/>
</dbReference>
<dbReference type="PIRSF" id="PIRSF000414">
    <property type="entry name" value="AICARFT_IMPCHas"/>
    <property type="match status" value="1"/>
</dbReference>
<dbReference type="SMART" id="SM00798">
    <property type="entry name" value="AICARFT_IMPCHas"/>
    <property type="match status" value="1"/>
</dbReference>
<dbReference type="SMART" id="SM00851">
    <property type="entry name" value="MGS"/>
    <property type="match status" value="1"/>
</dbReference>
<dbReference type="SUPFAM" id="SSF53927">
    <property type="entry name" value="Cytidine deaminase-like"/>
    <property type="match status" value="1"/>
</dbReference>
<dbReference type="SUPFAM" id="SSF52335">
    <property type="entry name" value="Methylglyoxal synthase-like"/>
    <property type="match status" value="1"/>
</dbReference>
<dbReference type="PROSITE" id="PS51855">
    <property type="entry name" value="MGS"/>
    <property type="match status" value="1"/>
</dbReference>
<protein>
    <recommendedName>
        <fullName evidence="1">Bifunctional purine biosynthesis protein PurH</fullName>
    </recommendedName>
    <domain>
        <recommendedName>
            <fullName evidence="1">Phosphoribosylaminoimidazolecarboxamide formyltransferase</fullName>
            <ecNumber evidence="1">2.1.2.3</ecNumber>
        </recommendedName>
        <alternativeName>
            <fullName evidence="1">AICAR transformylase</fullName>
        </alternativeName>
    </domain>
    <domain>
        <recommendedName>
            <fullName evidence="1">IMP cyclohydrolase</fullName>
            <ecNumber evidence="1">3.5.4.10</ecNumber>
        </recommendedName>
        <alternativeName>
            <fullName evidence="1">ATIC</fullName>
        </alternativeName>
        <alternativeName>
            <fullName evidence="1">IMP synthase</fullName>
        </alternativeName>
        <alternativeName>
            <fullName evidence="1">Inosinicase</fullName>
        </alternativeName>
    </domain>
</protein>
<feature type="chain" id="PRO_1000018982" description="Bifunctional purine biosynthesis protein PurH">
    <location>
        <begin position="1"/>
        <end position="520"/>
    </location>
</feature>
<feature type="domain" description="MGS-like" evidence="2">
    <location>
        <begin position="1"/>
        <end position="146"/>
    </location>
</feature>
<gene>
    <name evidence="1" type="primary">purH</name>
    <name type="ordered locus">Syncc9605_0243</name>
</gene>
<comment type="catalytic activity">
    <reaction evidence="1">
        <text>(6R)-10-formyltetrahydrofolate + 5-amino-1-(5-phospho-beta-D-ribosyl)imidazole-4-carboxamide = 5-formamido-1-(5-phospho-D-ribosyl)imidazole-4-carboxamide + (6S)-5,6,7,8-tetrahydrofolate</text>
        <dbReference type="Rhea" id="RHEA:22192"/>
        <dbReference type="ChEBI" id="CHEBI:57453"/>
        <dbReference type="ChEBI" id="CHEBI:58467"/>
        <dbReference type="ChEBI" id="CHEBI:58475"/>
        <dbReference type="ChEBI" id="CHEBI:195366"/>
        <dbReference type="EC" id="2.1.2.3"/>
    </reaction>
</comment>
<comment type="catalytic activity">
    <reaction evidence="1">
        <text>IMP + H2O = 5-formamido-1-(5-phospho-D-ribosyl)imidazole-4-carboxamide</text>
        <dbReference type="Rhea" id="RHEA:18445"/>
        <dbReference type="ChEBI" id="CHEBI:15377"/>
        <dbReference type="ChEBI" id="CHEBI:58053"/>
        <dbReference type="ChEBI" id="CHEBI:58467"/>
        <dbReference type="EC" id="3.5.4.10"/>
    </reaction>
</comment>
<comment type="pathway">
    <text evidence="1">Purine metabolism; IMP biosynthesis via de novo pathway; 5-formamido-1-(5-phospho-D-ribosyl)imidazole-4-carboxamide from 5-amino-1-(5-phospho-D-ribosyl)imidazole-4-carboxamide (10-formyl THF route): step 1/1.</text>
</comment>
<comment type="pathway">
    <text evidence="1">Purine metabolism; IMP biosynthesis via de novo pathway; IMP from 5-formamido-1-(5-phospho-D-ribosyl)imidazole-4-carboxamide: step 1/1.</text>
</comment>
<comment type="domain">
    <text evidence="1">The IMP cyclohydrolase activity resides in the N-terminal region.</text>
</comment>
<comment type="similarity">
    <text evidence="1">Belongs to the PurH family.</text>
</comment>
<keyword id="KW-0378">Hydrolase</keyword>
<keyword id="KW-0511">Multifunctional enzyme</keyword>
<keyword id="KW-0658">Purine biosynthesis</keyword>
<keyword id="KW-0808">Transferase</keyword>
<name>PUR9_SYNSC</name>
<accession>Q3AN13</accession>
<evidence type="ECO:0000255" key="1">
    <source>
        <dbReference type="HAMAP-Rule" id="MF_00139"/>
    </source>
</evidence>
<evidence type="ECO:0000255" key="2">
    <source>
        <dbReference type="PROSITE-ProRule" id="PRU01202"/>
    </source>
</evidence>
<reference key="1">
    <citation type="submission" date="2005-07" db="EMBL/GenBank/DDBJ databases">
        <title>Complete sequence of Synechococcus sp. CC9605.</title>
        <authorList>
            <consortium name="US DOE Joint Genome Institute"/>
            <person name="Copeland A."/>
            <person name="Lucas S."/>
            <person name="Lapidus A."/>
            <person name="Barry K."/>
            <person name="Detter J.C."/>
            <person name="Glavina T."/>
            <person name="Hammon N."/>
            <person name="Israni S."/>
            <person name="Pitluck S."/>
            <person name="Schmutz J."/>
            <person name="Martinez M."/>
            <person name="Larimer F."/>
            <person name="Land M."/>
            <person name="Kyrpides N."/>
            <person name="Ivanova N."/>
            <person name="Richardson P."/>
        </authorList>
    </citation>
    <scope>NUCLEOTIDE SEQUENCE [LARGE SCALE GENOMIC DNA]</scope>
    <source>
        <strain>CC9605</strain>
    </source>
</reference>